<dbReference type="EC" id="3.2.1.52" evidence="1"/>
<dbReference type="EMBL" id="AP009240">
    <property type="protein sequence ID" value="BAG76696.1"/>
    <property type="molecule type" value="Genomic_DNA"/>
</dbReference>
<dbReference type="RefSeq" id="WP_000529331.1">
    <property type="nucleotide sequence ID" value="NC_011415.1"/>
</dbReference>
<dbReference type="SMR" id="B6I9I5"/>
<dbReference type="CAZy" id="GH3">
    <property type="family name" value="Glycoside Hydrolase Family 3"/>
</dbReference>
<dbReference type="KEGG" id="ecy:ECSE_1172"/>
<dbReference type="HOGENOM" id="CLU_008392_0_0_6"/>
<dbReference type="UniPathway" id="UPA00544"/>
<dbReference type="Proteomes" id="UP000008199">
    <property type="component" value="Chromosome"/>
</dbReference>
<dbReference type="GO" id="GO:0005737">
    <property type="term" value="C:cytoplasm"/>
    <property type="evidence" value="ECO:0007669"/>
    <property type="project" value="UniProtKB-SubCell"/>
</dbReference>
<dbReference type="GO" id="GO:0004563">
    <property type="term" value="F:beta-N-acetylhexosaminidase activity"/>
    <property type="evidence" value="ECO:0007669"/>
    <property type="project" value="UniProtKB-UniRule"/>
</dbReference>
<dbReference type="GO" id="GO:0005975">
    <property type="term" value="P:carbohydrate metabolic process"/>
    <property type="evidence" value="ECO:0007669"/>
    <property type="project" value="InterPro"/>
</dbReference>
<dbReference type="GO" id="GO:0051301">
    <property type="term" value="P:cell division"/>
    <property type="evidence" value="ECO:0007669"/>
    <property type="project" value="UniProtKB-KW"/>
</dbReference>
<dbReference type="GO" id="GO:0071555">
    <property type="term" value="P:cell wall organization"/>
    <property type="evidence" value="ECO:0007669"/>
    <property type="project" value="UniProtKB-KW"/>
</dbReference>
<dbReference type="GO" id="GO:0009252">
    <property type="term" value="P:peptidoglycan biosynthetic process"/>
    <property type="evidence" value="ECO:0007669"/>
    <property type="project" value="UniProtKB-KW"/>
</dbReference>
<dbReference type="GO" id="GO:0009254">
    <property type="term" value="P:peptidoglycan turnover"/>
    <property type="evidence" value="ECO:0007669"/>
    <property type="project" value="UniProtKB-UniRule"/>
</dbReference>
<dbReference type="GO" id="GO:0008360">
    <property type="term" value="P:regulation of cell shape"/>
    <property type="evidence" value="ECO:0007669"/>
    <property type="project" value="UniProtKB-KW"/>
</dbReference>
<dbReference type="FunFam" id="3.20.20.300:FF:000001">
    <property type="entry name" value="Beta-hexosaminidase"/>
    <property type="match status" value="1"/>
</dbReference>
<dbReference type="Gene3D" id="3.20.20.300">
    <property type="entry name" value="Glycoside hydrolase, family 3, N-terminal domain"/>
    <property type="match status" value="1"/>
</dbReference>
<dbReference type="HAMAP" id="MF_00364">
    <property type="entry name" value="NagZ"/>
    <property type="match status" value="1"/>
</dbReference>
<dbReference type="InterPro" id="IPR022956">
    <property type="entry name" value="Beta_hexosaminidase_bac"/>
</dbReference>
<dbReference type="InterPro" id="IPR019800">
    <property type="entry name" value="Glyco_hydro_3_AS"/>
</dbReference>
<dbReference type="InterPro" id="IPR001764">
    <property type="entry name" value="Glyco_hydro_3_N"/>
</dbReference>
<dbReference type="InterPro" id="IPR036962">
    <property type="entry name" value="Glyco_hydro_3_N_sf"/>
</dbReference>
<dbReference type="InterPro" id="IPR017853">
    <property type="entry name" value="Glycoside_hydrolase_SF"/>
</dbReference>
<dbReference type="InterPro" id="IPR050226">
    <property type="entry name" value="NagZ_Beta-hexosaminidase"/>
</dbReference>
<dbReference type="NCBIfam" id="NF003740">
    <property type="entry name" value="PRK05337.1"/>
    <property type="match status" value="1"/>
</dbReference>
<dbReference type="PANTHER" id="PTHR30480:SF13">
    <property type="entry name" value="BETA-HEXOSAMINIDASE"/>
    <property type="match status" value="1"/>
</dbReference>
<dbReference type="PANTHER" id="PTHR30480">
    <property type="entry name" value="BETA-HEXOSAMINIDASE-RELATED"/>
    <property type="match status" value="1"/>
</dbReference>
<dbReference type="Pfam" id="PF00933">
    <property type="entry name" value="Glyco_hydro_3"/>
    <property type="match status" value="1"/>
</dbReference>
<dbReference type="SUPFAM" id="SSF51445">
    <property type="entry name" value="(Trans)glycosidases"/>
    <property type="match status" value="1"/>
</dbReference>
<dbReference type="PROSITE" id="PS00775">
    <property type="entry name" value="GLYCOSYL_HYDROL_F3"/>
    <property type="match status" value="1"/>
</dbReference>
<sequence length="341" mass="37575">MGPVMLDVKGYELDAEEREILAHPLVGGLILFTRNYHDPAQLRELVRQIRAASRNHLVVAVDQEGGRVQRFREGFTRLPAAQSFAALSGMEEGGKLAQEAGWLMASEMIAMDIDISFAPVLDVGHISAAIGERSYHADPQKALAIASRFIDGMHEAGMKTTGKHFPGHGAVTADSHKETPCDPRPQAEIRAKDMSVFSSLIRENKLDAIMPAHVIYSDVDPRPASGSPYWLKTVLRQELGFDGVIFSDDLSMEGAAIMGSYAERGQASLDAGCDMILVCNNRKGAVSVLDNLSPIKAERVTRLYHKGSFSRQELMDSARWKAISTRLNQLHERWQEEKAGH</sequence>
<proteinExistence type="inferred from homology"/>
<name>NAGZ_ECOSE</name>
<feature type="chain" id="PRO_1000121059" description="Beta-hexosaminidase">
    <location>
        <begin position="1"/>
        <end position="341"/>
    </location>
</feature>
<feature type="active site" description="Proton donor/acceptor" evidence="1">
    <location>
        <position position="176"/>
    </location>
</feature>
<feature type="active site" description="Nucleophile" evidence="1">
    <location>
        <position position="248"/>
    </location>
</feature>
<feature type="binding site" evidence="1">
    <location>
        <position position="62"/>
    </location>
    <ligand>
        <name>substrate</name>
    </ligand>
</feature>
<feature type="binding site" evidence="1">
    <location>
        <position position="70"/>
    </location>
    <ligand>
        <name>substrate</name>
    </ligand>
</feature>
<feature type="binding site" evidence="1">
    <location>
        <position position="133"/>
    </location>
    <ligand>
        <name>substrate</name>
    </ligand>
</feature>
<feature type="binding site" evidence="1">
    <location>
        <begin position="163"/>
        <end position="164"/>
    </location>
    <ligand>
        <name>substrate</name>
    </ligand>
</feature>
<feature type="site" description="Important for catalytic activity" evidence="1">
    <location>
        <position position="174"/>
    </location>
</feature>
<organism>
    <name type="scientific">Escherichia coli (strain SE11)</name>
    <dbReference type="NCBI Taxonomy" id="409438"/>
    <lineage>
        <taxon>Bacteria</taxon>
        <taxon>Pseudomonadati</taxon>
        <taxon>Pseudomonadota</taxon>
        <taxon>Gammaproteobacteria</taxon>
        <taxon>Enterobacterales</taxon>
        <taxon>Enterobacteriaceae</taxon>
        <taxon>Escherichia</taxon>
    </lineage>
</organism>
<keyword id="KW-0131">Cell cycle</keyword>
<keyword id="KW-0132">Cell division</keyword>
<keyword id="KW-0133">Cell shape</keyword>
<keyword id="KW-0961">Cell wall biogenesis/degradation</keyword>
<keyword id="KW-0963">Cytoplasm</keyword>
<keyword id="KW-0326">Glycosidase</keyword>
<keyword id="KW-0378">Hydrolase</keyword>
<keyword id="KW-0573">Peptidoglycan synthesis</keyword>
<gene>
    <name evidence="1" type="primary">nagZ</name>
    <name type="ordered locus">ECSE_1172</name>
</gene>
<reference key="1">
    <citation type="journal article" date="2008" name="DNA Res.">
        <title>Complete genome sequence and comparative analysis of the wild-type commensal Escherichia coli strain SE11 isolated from a healthy adult.</title>
        <authorList>
            <person name="Oshima K."/>
            <person name="Toh H."/>
            <person name="Ogura Y."/>
            <person name="Sasamoto H."/>
            <person name="Morita H."/>
            <person name="Park S.-H."/>
            <person name="Ooka T."/>
            <person name="Iyoda S."/>
            <person name="Taylor T.D."/>
            <person name="Hayashi T."/>
            <person name="Itoh K."/>
            <person name="Hattori M."/>
        </authorList>
    </citation>
    <scope>NUCLEOTIDE SEQUENCE [LARGE SCALE GENOMIC DNA]</scope>
    <source>
        <strain>SE11</strain>
    </source>
</reference>
<comment type="function">
    <text evidence="1">Plays a role in peptidoglycan recycling by cleaving the terminal beta-1,4-linked N-acetylglucosamine (GlcNAc) from peptide-linked peptidoglycan fragments, giving rise to free GlcNAc, anhydro-N-acetylmuramic acid and anhydro-N-acetylmuramic acid-linked peptides.</text>
</comment>
<comment type="catalytic activity">
    <reaction evidence="1">
        <text>Hydrolysis of terminal non-reducing N-acetyl-D-hexosamine residues in N-acetyl-beta-D-hexosaminides.</text>
        <dbReference type="EC" id="3.2.1.52"/>
    </reaction>
</comment>
<comment type="pathway">
    <text evidence="1">Cell wall biogenesis; peptidoglycan recycling.</text>
</comment>
<comment type="subcellular location">
    <subcellularLocation>
        <location evidence="1">Cytoplasm</location>
    </subcellularLocation>
</comment>
<comment type="similarity">
    <text evidence="1">Belongs to the glycosyl hydrolase 3 family. NagZ subfamily.</text>
</comment>
<accession>B6I9I5</accession>
<protein>
    <recommendedName>
        <fullName evidence="1">Beta-hexosaminidase</fullName>
        <ecNumber evidence="1">3.2.1.52</ecNumber>
    </recommendedName>
    <alternativeName>
        <fullName evidence="1">Beta-N-acetylhexosaminidase</fullName>
    </alternativeName>
    <alternativeName>
        <fullName evidence="1">N-acetyl-beta-glucosaminidase</fullName>
    </alternativeName>
</protein>
<evidence type="ECO:0000255" key="1">
    <source>
        <dbReference type="HAMAP-Rule" id="MF_00364"/>
    </source>
</evidence>